<evidence type="ECO:0000255" key="1">
    <source>
        <dbReference type="HAMAP-Rule" id="MF_00672"/>
    </source>
</evidence>
<name>YIHY_SALG2</name>
<protein>
    <recommendedName>
        <fullName evidence="1">UPF0761 membrane protein YihY</fullName>
    </recommendedName>
</protein>
<proteinExistence type="inferred from homology"/>
<feature type="chain" id="PRO_1000131562" description="UPF0761 membrane protein YihY">
    <location>
        <begin position="1"/>
        <end position="290"/>
    </location>
</feature>
<feature type="transmembrane region" description="Helical" evidence="1">
    <location>
        <begin position="44"/>
        <end position="64"/>
    </location>
</feature>
<feature type="transmembrane region" description="Helical" evidence="1">
    <location>
        <begin position="104"/>
        <end position="124"/>
    </location>
</feature>
<feature type="transmembrane region" description="Helical" evidence="1">
    <location>
        <begin position="140"/>
        <end position="160"/>
    </location>
</feature>
<feature type="transmembrane region" description="Helical" evidence="1">
    <location>
        <begin position="183"/>
        <end position="203"/>
    </location>
</feature>
<feature type="transmembrane region" description="Helical" evidence="1">
    <location>
        <begin position="210"/>
        <end position="230"/>
    </location>
</feature>
<feature type="transmembrane region" description="Helical" evidence="1">
    <location>
        <begin position="244"/>
        <end position="264"/>
    </location>
</feature>
<gene>
    <name evidence="1" type="primary">yihY</name>
    <name type="ordered locus">SG3398</name>
</gene>
<sequence length="290" mass="32645">MLKTVHQKAGRHTRPVRAWLKLLWQRIDEDNMTTLAGNLAYVSLLSLVPLIAVVFALFAAFPMFSDVSIQLRHFIFANFMPATGDVIQRYIEQFVANSNKMTAVGACGLIVTALLLMYAIDSALNTIWRSKRTRPKVYSFAVYWMILTLGPLLAGASLAISSYLLSLRWASDLNTVIDNVLRILPLLLSWISFWLLYSIVPTTRVPNRDALVGAFVAALLFEAGKKGFALYITMFPSYQLIYGVLAVIPILFVWVYWTWCIVLLGAEITVTLGEYRKLKQAAEQEEADQP</sequence>
<comment type="subcellular location">
    <subcellularLocation>
        <location evidence="1">Cell inner membrane</location>
        <topology evidence="1">Multi-pass membrane protein</topology>
    </subcellularLocation>
</comment>
<comment type="similarity">
    <text evidence="1">Belongs to the UPF0761 family.</text>
</comment>
<accession>B5RFE6</accession>
<keyword id="KW-0997">Cell inner membrane</keyword>
<keyword id="KW-1003">Cell membrane</keyword>
<keyword id="KW-0472">Membrane</keyword>
<keyword id="KW-0812">Transmembrane</keyword>
<keyword id="KW-1133">Transmembrane helix</keyword>
<dbReference type="EMBL" id="AM933173">
    <property type="protein sequence ID" value="CAR39189.1"/>
    <property type="molecule type" value="Genomic_DNA"/>
</dbReference>
<dbReference type="RefSeq" id="WP_000921423.1">
    <property type="nucleotide sequence ID" value="NC_011274.1"/>
</dbReference>
<dbReference type="KEGG" id="seg:SG3398"/>
<dbReference type="HOGENOM" id="CLU_032288_0_0_6"/>
<dbReference type="Proteomes" id="UP000008321">
    <property type="component" value="Chromosome"/>
</dbReference>
<dbReference type="GO" id="GO:0005886">
    <property type="term" value="C:plasma membrane"/>
    <property type="evidence" value="ECO:0007669"/>
    <property type="project" value="UniProtKB-SubCell"/>
</dbReference>
<dbReference type="HAMAP" id="MF_00672">
    <property type="entry name" value="UPF0761"/>
    <property type="match status" value="1"/>
</dbReference>
<dbReference type="InterPro" id="IPR023679">
    <property type="entry name" value="UPF0761_bac"/>
</dbReference>
<dbReference type="InterPro" id="IPR017039">
    <property type="entry name" value="Virul_fac_BrkB"/>
</dbReference>
<dbReference type="NCBIfam" id="NF002457">
    <property type="entry name" value="PRK01637.1"/>
    <property type="match status" value="1"/>
</dbReference>
<dbReference type="NCBIfam" id="TIGR00765">
    <property type="entry name" value="yihY_not_rbn"/>
    <property type="match status" value="1"/>
</dbReference>
<dbReference type="PANTHER" id="PTHR30213">
    <property type="entry name" value="INNER MEMBRANE PROTEIN YHJD"/>
    <property type="match status" value="1"/>
</dbReference>
<dbReference type="PANTHER" id="PTHR30213:SF0">
    <property type="entry name" value="UPF0761 MEMBRANE PROTEIN YIHY"/>
    <property type="match status" value="1"/>
</dbReference>
<dbReference type="Pfam" id="PF03631">
    <property type="entry name" value="Virul_fac_BrkB"/>
    <property type="match status" value="1"/>
</dbReference>
<dbReference type="PIRSF" id="PIRSF035875">
    <property type="entry name" value="RNase_BN"/>
    <property type="match status" value="1"/>
</dbReference>
<reference key="1">
    <citation type="journal article" date="2008" name="Genome Res.">
        <title>Comparative genome analysis of Salmonella enteritidis PT4 and Salmonella gallinarum 287/91 provides insights into evolutionary and host adaptation pathways.</title>
        <authorList>
            <person name="Thomson N.R."/>
            <person name="Clayton D.J."/>
            <person name="Windhorst D."/>
            <person name="Vernikos G."/>
            <person name="Davidson S."/>
            <person name="Churcher C."/>
            <person name="Quail M.A."/>
            <person name="Stevens M."/>
            <person name="Jones M.A."/>
            <person name="Watson M."/>
            <person name="Barron A."/>
            <person name="Layton A."/>
            <person name="Pickard D."/>
            <person name="Kingsley R.A."/>
            <person name="Bignell A."/>
            <person name="Clark L."/>
            <person name="Harris B."/>
            <person name="Ormond D."/>
            <person name="Abdellah Z."/>
            <person name="Brooks K."/>
            <person name="Cherevach I."/>
            <person name="Chillingworth T."/>
            <person name="Woodward J."/>
            <person name="Norberczak H."/>
            <person name="Lord A."/>
            <person name="Arrowsmith C."/>
            <person name="Jagels K."/>
            <person name="Moule S."/>
            <person name="Mungall K."/>
            <person name="Saunders M."/>
            <person name="Whitehead S."/>
            <person name="Chabalgoity J.A."/>
            <person name="Maskell D."/>
            <person name="Humphreys T."/>
            <person name="Roberts M."/>
            <person name="Barrow P.A."/>
            <person name="Dougan G."/>
            <person name="Parkhill J."/>
        </authorList>
    </citation>
    <scope>NUCLEOTIDE SEQUENCE [LARGE SCALE GENOMIC DNA]</scope>
    <source>
        <strain>287/91 / NCTC 13346</strain>
    </source>
</reference>
<organism>
    <name type="scientific">Salmonella gallinarum (strain 287/91 / NCTC 13346)</name>
    <dbReference type="NCBI Taxonomy" id="550538"/>
    <lineage>
        <taxon>Bacteria</taxon>
        <taxon>Pseudomonadati</taxon>
        <taxon>Pseudomonadota</taxon>
        <taxon>Gammaproteobacteria</taxon>
        <taxon>Enterobacterales</taxon>
        <taxon>Enterobacteriaceae</taxon>
        <taxon>Salmonella</taxon>
    </lineage>
</organism>